<keyword id="KW-0997">Cell inner membrane</keyword>
<keyword id="KW-1003">Cell membrane</keyword>
<keyword id="KW-0406">Ion transport</keyword>
<keyword id="KW-0472">Membrane</keyword>
<keyword id="KW-0520">NAD</keyword>
<keyword id="KW-1185">Reference proteome</keyword>
<keyword id="KW-0915">Sodium</keyword>
<keyword id="KW-0739">Sodium transport</keyword>
<keyword id="KW-1278">Translocase</keyword>
<keyword id="KW-0812">Transmembrane</keyword>
<keyword id="KW-1133">Transmembrane helix</keyword>
<keyword id="KW-0813">Transport</keyword>
<keyword id="KW-0830">Ubiquinone</keyword>
<reference key="1">
    <citation type="submission" date="2006-03" db="EMBL/GenBank/DDBJ databases">
        <title>Complete sequence of Shewanella denitrificans OS217.</title>
        <authorList>
            <consortium name="US DOE Joint Genome Institute"/>
            <person name="Copeland A."/>
            <person name="Lucas S."/>
            <person name="Lapidus A."/>
            <person name="Barry K."/>
            <person name="Detter J.C."/>
            <person name="Glavina del Rio T."/>
            <person name="Hammon N."/>
            <person name="Israni S."/>
            <person name="Dalin E."/>
            <person name="Tice H."/>
            <person name="Pitluck S."/>
            <person name="Brettin T."/>
            <person name="Bruce D."/>
            <person name="Han C."/>
            <person name="Tapia R."/>
            <person name="Gilna P."/>
            <person name="Kiss H."/>
            <person name="Schmutz J."/>
            <person name="Larimer F."/>
            <person name="Land M."/>
            <person name="Hauser L."/>
            <person name="Kyrpides N."/>
            <person name="Lykidis A."/>
            <person name="Richardson P."/>
        </authorList>
    </citation>
    <scope>NUCLEOTIDE SEQUENCE [LARGE SCALE GENOMIC DNA]</scope>
    <source>
        <strain>OS217 / ATCC BAA-1090 / DSM 15013</strain>
    </source>
</reference>
<evidence type="ECO:0000255" key="1">
    <source>
        <dbReference type="HAMAP-Rule" id="MF_00429"/>
    </source>
</evidence>
<proteinExistence type="inferred from homology"/>
<feature type="chain" id="PRO_1000060217" description="Na(+)-translocating NADH-quinone reductase subunit E">
    <location>
        <begin position="1"/>
        <end position="202"/>
    </location>
</feature>
<feature type="transmembrane region" description="Helical" evidence="1">
    <location>
        <begin position="11"/>
        <end position="31"/>
    </location>
</feature>
<feature type="transmembrane region" description="Helical" evidence="1">
    <location>
        <begin position="35"/>
        <end position="55"/>
    </location>
</feature>
<feature type="transmembrane region" description="Helical" evidence="1">
    <location>
        <begin position="79"/>
        <end position="99"/>
    </location>
</feature>
<feature type="transmembrane region" description="Helical" evidence="1">
    <location>
        <begin position="114"/>
        <end position="134"/>
    </location>
</feature>
<feature type="transmembrane region" description="Helical" evidence="1">
    <location>
        <begin position="144"/>
        <end position="164"/>
    </location>
</feature>
<feature type="transmembrane region" description="Helical" evidence="1">
    <location>
        <begin position="180"/>
        <end position="200"/>
    </location>
</feature>
<organism>
    <name type="scientific">Shewanella denitrificans (strain OS217 / ATCC BAA-1090 / DSM 15013)</name>
    <dbReference type="NCBI Taxonomy" id="318161"/>
    <lineage>
        <taxon>Bacteria</taxon>
        <taxon>Pseudomonadati</taxon>
        <taxon>Pseudomonadota</taxon>
        <taxon>Gammaproteobacteria</taxon>
        <taxon>Alteromonadales</taxon>
        <taxon>Shewanellaceae</taxon>
        <taxon>Shewanella</taxon>
    </lineage>
</organism>
<name>NQRE_SHEDO</name>
<dbReference type="EC" id="7.2.1.1" evidence="1"/>
<dbReference type="EMBL" id="CP000302">
    <property type="protein sequence ID" value="ABE54274.1"/>
    <property type="molecule type" value="Genomic_DNA"/>
</dbReference>
<dbReference type="RefSeq" id="WP_011495438.1">
    <property type="nucleotide sequence ID" value="NC_007954.1"/>
</dbReference>
<dbReference type="SMR" id="Q12QK2"/>
<dbReference type="STRING" id="318161.Sden_0986"/>
<dbReference type="KEGG" id="sdn:Sden_0986"/>
<dbReference type="eggNOG" id="COG2209">
    <property type="taxonomic scope" value="Bacteria"/>
</dbReference>
<dbReference type="HOGENOM" id="CLU_095255_0_0_6"/>
<dbReference type="OrthoDB" id="9803631at2"/>
<dbReference type="Proteomes" id="UP000001982">
    <property type="component" value="Chromosome"/>
</dbReference>
<dbReference type="GO" id="GO:0009276">
    <property type="term" value="C:Gram-negative-bacterium-type cell wall"/>
    <property type="evidence" value="ECO:0007669"/>
    <property type="project" value="InterPro"/>
</dbReference>
<dbReference type="GO" id="GO:0005886">
    <property type="term" value="C:plasma membrane"/>
    <property type="evidence" value="ECO:0007669"/>
    <property type="project" value="UniProtKB-SubCell"/>
</dbReference>
<dbReference type="GO" id="GO:0016655">
    <property type="term" value="F:oxidoreductase activity, acting on NAD(P)H, quinone or similar compound as acceptor"/>
    <property type="evidence" value="ECO:0007669"/>
    <property type="project" value="UniProtKB-UniRule"/>
</dbReference>
<dbReference type="GO" id="GO:0022904">
    <property type="term" value="P:respiratory electron transport chain"/>
    <property type="evidence" value="ECO:0007669"/>
    <property type="project" value="InterPro"/>
</dbReference>
<dbReference type="GO" id="GO:0006814">
    <property type="term" value="P:sodium ion transport"/>
    <property type="evidence" value="ECO:0007669"/>
    <property type="project" value="UniProtKB-UniRule"/>
</dbReference>
<dbReference type="HAMAP" id="MF_00429">
    <property type="entry name" value="NqrE"/>
    <property type="match status" value="1"/>
</dbReference>
<dbReference type="InterPro" id="IPR003667">
    <property type="entry name" value="NqrDE/RnfAE"/>
</dbReference>
<dbReference type="InterPro" id="IPR050133">
    <property type="entry name" value="NqrDE/RnfAE_oxidrdctase"/>
</dbReference>
<dbReference type="InterPro" id="IPR010967">
    <property type="entry name" value="NqrE"/>
</dbReference>
<dbReference type="NCBIfam" id="TIGR01940">
    <property type="entry name" value="nqrE"/>
    <property type="match status" value="1"/>
</dbReference>
<dbReference type="PANTHER" id="PTHR30335">
    <property type="entry name" value="INTEGRAL MEMBRANE PROTEIN OF SOXR-REDUCING COMPLEX"/>
    <property type="match status" value="1"/>
</dbReference>
<dbReference type="PANTHER" id="PTHR30335:SF1">
    <property type="entry name" value="NA(+)-TRANSLOCATING NADH-QUINONE REDUCTASE SUBUNIT E"/>
    <property type="match status" value="1"/>
</dbReference>
<dbReference type="Pfam" id="PF02508">
    <property type="entry name" value="Rnf-Nqr"/>
    <property type="match status" value="1"/>
</dbReference>
<dbReference type="PIRSF" id="PIRSF006102">
    <property type="entry name" value="NQR_DE"/>
    <property type="match status" value="1"/>
</dbReference>
<protein>
    <recommendedName>
        <fullName evidence="1">Na(+)-translocating NADH-quinone reductase subunit E</fullName>
        <shortName evidence="1">Na(+)-NQR subunit E</shortName>
        <shortName evidence="1">Na(+)-translocating NQR subunit E</shortName>
        <ecNumber evidence="1">7.2.1.1</ecNumber>
    </recommendedName>
    <alternativeName>
        <fullName evidence="1">NQR complex subunit E</fullName>
    </alternativeName>
    <alternativeName>
        <fullName evidence="1">NQR-1 subunit E</fullName>
    </alternativeName>
</protein>
<accession>Q12QK2</accession>
<sequence>MEHYISLLIRSVFIENMALSFFLGMCTFLAVSKKVTTAMGLGVAVIVVLAISVPANQIIYQGILAPGALAWAGVPDADLSFLKFITFIGVIAALVQILEMTLDKYFPPLYNALGIFLPLITVNCAIFGAVAFMVERDYNLTESLVFGVGSGIGWALAIVLLAAVREKMKYSDVPNGLRGLGITFISAGLMALGFMSFSGVSL</sequence>
<gene>
    <name evidence="1" type="primary">nqrE</name>
    <name type="ordered locus">Sden_0986</name>
</gene>
<comment type="function">
    <text evidence="1">NQR complex catalyzes the reduction of ubiquinone-1 to ubiquinol by two successive reactions, coupled with the transport of Na(+) ions from the cytoplasm to the periplasm. NqrA to NqrE are probably involved in the second step, the conversion of ubisemiquinone to ubiquinol.</text>
</comment>
<comment type="catalytic activity">
    <reaction evidence="1">
        <text>a ubiquinone + n Na(+)(in) + NADH + H(+) = a ubiquinol + n Na(+)(out) + NAD(+)</text>
        <dbReference type="Rhea" id="RHEA:47748"/>
        <dbReference type="Rhea" id="RHEA-COMP:9565"/>
        <dbReference type="Rhea" id="RHEA-COMP:9566"/>
        <dbReference type="ChEBI" id="CHEBI:15378"/>
        <dbReference type="ChEBI" id="CHEBI:16389"/>
        <dbReference type="ChEBI" id="CHEBI:17976"/>
        <dbReference type="ChEBI" id="CHEBI:29101"/>
        <dbReference type="ChEBI" id="CHEBI:57540"/>
        <dbReference type="ChEBI" id="CHEBI:57945"/>
        <dbReference type="EC" id="7.2.1.1"/>
    </reaction>
</comment>
<comment type="subunit">
    <text evidence="1">Composed of six subunits; NqrA, NqrB, NqrC, NqrD, NqrE and NqrF.</text>
</comment>
<comment type="subcellular location">
    <subcellularLocation>
        <location evidence="1">Cell inner membrane</location>
        <topology evidence="1">Multi-pass membrane protein</topology>
    </subcellularLocation>
</comment>
<comment type="similarity">
    <text evidence="1">Belongs to the NqrDE/RnfAE family.</text>
</comment>